<gene>
    <name evidence="1" type="primary">srp54</name>
    <name type="ordered locus">rrnAC3124</name>
</gene>
<feature type="chain" id="PRO_0000322240" description="Signal recognition particle 54 kDa protein">
    <location>
        <begin position="1"/>
        <end position="469"/>
    </location>
</feature>
<feature type="region of interest" description="Disordered" evidence="2">
    <location>
        <begin position="388"/>
        <end position="410"/>
    </location>
</feature>
<feature type="region of interest" description="Disordered" evidence="2">
    <location>
        <begin position="447"/>
        <end position="469"/>
    </location>
</feature>
<feature type="compositionally biased region" description="Gly residues" evidence="2">
    <location>
        <begin position="448"/>
        <end position="469"/>
    </location>
</feature>
<feature type="binding site" evidence="1">
    <location>
        <begin position="104"/>
        <end position="111"/>
    </location>
    <ligand>
        <name>GTP</name>
        <dbReference type="ChEBI" id="CHEBI:37565"/>
    </ligand>
</feature>
<feature type="binding site" evidence="1">
    <location>
        <begin position="184"/>
        <end position="188"/>
    </location>
    <ligand>
        <name>GTP</name>
        <dbReference type="ChEBI" id="CHEBI:37565"/>
    </ligand>
</feature>
<feature type="binding site" evidence="1">
    <location>
        <begin position="242"/>
        <end position="245"/>
    </location>
    <ligand>
        <name>GTP</name>
        <dbReference type="ChEBI" id="CHEBI:37565"/>
    </ligand>
</feature>
<reference key="1">
    <citation type="journal article" date="2004" name="Genome Res.">
        <title>Genome sequence of Haloarcula marismortui: a halophilic archaeon from the Dead Sea.</title>
        <authorList>
            <person name="Baliga N.S."/>
            <person name="Bonneau R."/>
            <person name="Facciotti M.T."/>
            <person name="Pan M."/>
            <person name="Glusman G."/>
            <person name="Deutsch E.W."/>
            <person name="Shannon P."/>
            <person name="Chiu Y."/>
            <person name="Weng R.S."/>
            <person name="Gan R.R."/>
            <person name="Hung P."/>
            <person name="Date S.V."/>
            <person name="Marcotte E."/>
            <person name="Hood L."/>
            <person name="Ng W.V."/>
        </authorList>
    </citation>
    <scope>NUCLEOTIDE SEQUENCE [LARGE SCALE GENOMIC DNA]</scope>
    <source>
        <strain>ATCC 43049 / DSM 3752 / JCM 8966 / VKM B-1809</strain>
    </source>
</reference>
<proteinExistence type="inferred from homology"/>
<accession>Q5UY20</accession>
<evidence type="ECO:0000255" key="1">
    <source>
        <dbReference type="HAMAP-Rule" id="MF_00306"/>
    </source>
</evidence>
<evidence type="ECO:0000256" key="2">
    <source>
        <dbReference type="SAM" id="MobiDB-lite"/>
    </source>
</evidence>
<comment type="function">
    <text evidence="1">Involved in targeting and insertion of nascent membrane proteins into the cytoplasmic membrane. Binds to the hydrophobic signal sequence of the ribosome-nascent chain (RNC) as it emerges from the ribosomes. The SRP-RNC complex is then targeted to the cytoplasmic membrane where it interacts with the SRP receptor FtsY.</text>
</comment>
<comment type="catalytic activity">
    <reaction evidence="1">
        <text>GTP + H2O = GDP + phosphate + H(+)</text>
        <dbReference type="Rhea" id="RHEA:19669"/>
        <dbReference type="ChEBI" id="CHEBI:15377"/>
        <dbReference type="ChEBI" id="CHEBI:15378"/>
        <dbReference type="ChEBI" id="CHEBI:37565"/>
        <dbReference type="ChEBI" id="CHEBI:43474"/>
        <dbReference type="ChEBI" id="CHEBI:58189"/>
        <dbReference type="EC" id="3.6.5.4"/>
    </reaction>
</comment>
<comment type="subunit">
    <text evidence="1">Part of the signal recognition particle protein translocation system, which is composed of SRP and FtsY. Archaeal SRP consists of a 7S RNA molecule of 300 nucleotides and two protein subunits: SRP54 and SRP19.</text>
</comment>
<comment type="subcellular location">
    <subcellularLocation>
        <location evidence="1">Cytoplasm</location>
    </subcellularLocation>
    <text evidence="1">The SRP-RNC complex is targeted to the cytoplasmic membrane.</text>
</comment>
<comment type="domain">
    <text evidence="1">Composed of three domains: the N-terminal N domain, which is responsible for interactions with the ribosome, the central G domain, which binds GTP, and the C-terminal M domain, which binds the RNA and the signal sequence of the RNC.</text>
</comment>
<comment type="similarity">
    <text evidence="1">Belongs to the GTP-binding SRP family. SRP54 subfamily.</text>
</comment>
<dbReference type="EC" id="3.6.5.4" evidence="1"/>
<dbReference type="EMBL" id="AY596297">
    <property type="protein sequence ID" value="AAV47833.1"/>
    <property type="molecule type" value="Genomic_DNA"/>
</dbReference>
<dbReference type="RefSeq" id="WP_004964625.1">
    <property type="nucleotide sequence ID" value="NZ_CP039138.1"/>
</dbReference>
<dbReference type="SMR" id="Q5UY20"/>
<dbReference type="STRING" id="272569.rrnAC3124"/>
<dbReference type="TCDB" id="3.A.5.7.1">
    <property type="family name" value="the general secretory pathway (sec) family"/>
</dbReference>
<dbReference type="PaxDb" id="272569-rrnAC3124"/>
<dbReference type="EnsemblBacteria" id="AAV47833">
    <property type="protein sequence ID" value="AAV47833"/>
    <property type="gene ID" value="rrnAC3124"/>
</dbReference>
<dbReference type="KEGG" id="hma:rrnAC3124"/>
<dbReference type="PATRIC" id="fig|272569.17.peg.3667"/>
<dbReference type="eggNOG" id="arCOG01228">
    <property type="taxonomic scope" value="Archaea"/>
</dbReference>
<dbReference type="HOGENOM" id="CLU_009301_6_0_2"/>
<dbReference type="Proteomes" id="UP000001169">
    <property type="component" value="Chromosome I"/>
</dbReference>
<dbReference type="GO" id="GO:0048500">
    <property type="term" value="C:signal recognition particle"/>
    <property type="evidence" value="ECO:0007669"/>
    <property type="project" value="UniProtKB-UniRule"/>
</dbReference>
<dbReference type="GO" id="GO:0008312">
    <property type="term" value="F:7S RNA binding"/>
    <property type="evidence" value="ECO:0007669"/>
    <property type="project" value="UniProtKB-UniRule"/>
</dbReference>
<dbReference type="GO" id="GO:0005525">
    <property type="term" value="F:GTP binding"/>
    <property type="evidence" value="ECO:0007669"/>
    <property type="project" value="UniProtKB-UniRule"/>
</dbReference>
<dbReference type="GO" id="GO:0003924">
    <property type="term" value="F:GTPase activity"/>
    <property type="evidence" value="ECO:0007669"/>
    <property type="project" value="UniProtKB-UniRule"/>
</dbReference>
<dbReference type="GO" id="GO:0006614">
    <property type="term" value="P:SRP-dependent cotranslational protein targeting to membrane"/>
    <property type="evidence" value="ECO:0007669"/>
    <property type="project" value="InterPro"/>
</dbReference>
<dbReference type="CDD" id="cd17875">
    <property type="entry name" value="SRP54_G"/>
    <property type="match status" value="1"/>
</dbReference>
<dbReference type="Gene3D" id="3.40.50.300">
    <property type="entry name" value="P-loop containing nucleotide triphosphate hydrolases"/>
    <property type="match status" value="1"/>
</dbReference>
<dbReference type="Gene3D" id="1.20.120.140">
    <property type="entry name" value="Signal recognition particle SRP54, nucleotide-binding domain"/>
    <property type="match status" value="1"/>
</dbReference>
<dbReference type="Gene3D" id="1.10.260.30">
    <property type="entry name" value="Signal recognition particle, SRP54 subunit, M-domain"/>
    <property type="match status" value="1"/>
</dbReference>
<dbReference type="HAMAP" id="MF_00306">
    <property type="entry name" value="SRP54"/>
    <property type="match status" value="1"/>
</dbReference>
<dbReference type="InterPro" id="IPR027417">
    <property type="entry name" value="P-loop_NTPase"/>
</dbReference>
<dbReference type="InterPro" id="IPR036891">
    <property type="entry name" value="Signal_recog_part_SRP54_M_sf"/>
</dbReference>
<dbReference type="InterPro" id="IPR013822">
    <property type="entry name" value="Signal_recog_particl_SRP54_hlx"/>
</dbReference>
<dbReference type="InterPro" id="IPR004125">
    <property type="entry name" value="Signal_recog_particle_SRP54_M"/>
</dbReference>
<dbReference type="InterPro" id="IPR036225">
    <property type="entry name" value="SRP/SRP_N"/>
</dbReference>
<dbReference type="InterPro" id="IPR022941">
    <property type="entry name" value="SRP54"/>
</dbReference>
<dbReference type="InterPro" id="IPR000897">
    <property type="entry name" value="SRP54_GTPase_dom"/>
</dbReference>
<dbReference type="InterPro" id="IPR042101">
    <property type="entry name" value="SRP54_N_sf"/>
</dbReference>
<dbReference type="PANTHER" id="PTHR11564">
    <property type="entry name" value="SIGNAL RECOGNITION PARTICLE 54K PROTEIN SRP54"/>
    <property type="match status" value="1"/>
</dbReference>
<dbReference type="PANTHER" id="PTHR11564:SF5">
    <property type="entry name" value="SIGNAL RECOGNITION PARTICLE SUBUNIT SRP54"/>
    <property type="match status" value="1"/>
</dbReference>
<dbReference type="Pfam" id="PF00448">
    <property type="entry name" value="SRP54"/>
    <property type="match status" value="1"/>
</dbReference>
<dbReference type="Pfam" id="PF02881">
    <property type="entry name" value="SRP54_N"/>
    <property type="match status" value="1"/>
</dbReference>
<dbReference type="Pfam" id="PF02978">
    <property type="entry name" value="SRP_SPB"/>
    <property type="match status" value="1"/>
</dbReference>
<dbReference type="SMART" id="SM00962">
    <property type="entry name" value="SRP54"/>
    <property type="match status" value="1"/>
</dbReference>
<dbReference type="SMART" id="SM00963">
    <property type="entry name" value="SRP54_N"/>
    <property type="match status" value="1"/>
</dbReference>
<dbReference type="SUPFAM" id="SSF47364">
    <property type="entry name" value="Domain of the SRP/SRP receptor G-proteins"/>
    <property type="match status" value="1"/>
</dbReference>
<dbReference type="SUPFAM" id="SSF52540">
    <property type="entry name" value="P-loop containing nucleoside triphosphate hydrolases"/>
    <property type="match status" value="1"/>
</dbReference>
<dbReference type="SUPFAM" id="SSF47446">
    <property type="entry name" value="Signal peptide-binding domain"/>
    <property type="match status" value="1"/>
</dbReference>
<organism>
    <name type="scientific">Haloarcula marismortui (strain ATCC 43049 / DSM 3752 / JCM 8966 / VKM B-1809)</name>
    <name type="common">Halobacterium marismortui</name>
    <dbReference type="NCBI Taxonomy" id="272569"/>
    <lineage>
        <taxon>Archaea</taxon>
        <taxon>Methanobacteriati</taxon>
        <taxon>Methanobacteriota</taxon>
        <taxon>Stenosarchaea group</taxon>
        <taxon>Halobacteria</taxon>
        <taxon>Halobacteriales</taxon>
        <taxon>Haloarculaceae</taxon>
        <taxon>Haloarcula</taxon>
    </lineage>
</organism>
<protein>
    <recommendedName>
        <fullName evidence="1">Signal recognition particle 54 kDa protein</fullName>
        <shortName evidence="1">SRP54</shortName>
        <ecNumber evidence="1">3.6.5.4</ecNumber>
    </recommendedName>
</protein>
<sequence length="469" mass="51505">MVLDDLGSSLRGTLDDLRGKSRLSEEDIEDIVKEIQRSLLQADVDVGLVQDLSNSIETRALDEEPPAGTTPRDWVLRIVYEELVDLVGESTELPLEEQTIMLAGLYGSGKTTTAAKMAWWFSTKGLRPAIIQTDTDRPGAYDQSKEMAERAEVDFYGDPDEDDPVKIARDGLEATENADVRIVDTAGRDGLNEELIEQIERIEQEVQPDRDLLVLDAAMGQSAKSQAADFEAAIGIDGVVITKLDGTAKGGGALAAVNETDSTIAFLGSGETVKDIERFEPSGFISRLLGMGDLKQLTERVERAMEETQEGDEEDWDPEDMLEGQFTLKDMRKQMQTMNNMGPLDQVMDMIPGLGGGLMDQLPDDAMDVTQERMQDFDVIMDSMTEEELENPRVVGQSRTKRICRGSGKPEERVRELLQQHKQMEQMLKQFQGMGDGDMERMMKQMQQGGGGGGGMGGMGGGGMGPFGD</sequence>
<name>SRP54_HALMA</name>
<keyword id="KW-0963">Cytoplasm</keyword>
<keyword id="KW-0342">GTP-binding</keyword>
<keyword id="KW-0378">Hydrolase</keyword>
<keyword id="KW-0547">Nucleotide-binding</keyword>
<keyword id="KW-1185">Reference proteome</keyword>
<keyword id="KW-0687">Ribonucleoprotein</keyword>
<keyword id="KW-0694">RNA-binding</keyword>
<keyword id="KW-0733">Signal recognition particle</keyword>